<protein>
    <recommendedName>
        <fullName evidence="6">Glucose-1-phosphate adenylyltransferase large subunit 3, chloroplastic/amyloplastic</fullName>
        <shortName evidence="5">OsAGPL3</shortName>
        <shortName evidence="4">OsAPL3</shortName>
        <ecNumber evidence="7">2.7.7.27</ecNumber>
    </recommendedName>
    <alternativeName>
        <fullName evidence="6">ADP-glucose pyrophosphorylase AGPL3</fullName>
    </alternativeName>
    <alternativeName>
        <fullName evidence="6">ADP-glucose synthase AGPL3</fullName>
    </alternativeName>
</protein>
<name>GLGL3_ORYSJ</name>
<accession>Q688T8</accession>
<accession>O23809</accession>
<accession>Q0DFN5</accession>
<accession>Q9XHV4</accession>
<dbReference type="EC" id="2.7.7.27" evidence="7"/>
<dbReference type="EMBL" id="GQ150829">
    <property type="protein sequence ID" value="ACY56044.1"/>
    <property type="molecule type" value="Genomic_DNA"/>
</dbReference>
<dbReference type="EMBL" id="GQ150830">
    <property type="protein sequence ID" value="ACY56045.1"/>
    <property type="molecule type" value="Genomic_DNA"/>
</dbReference>
<dbReference type="EMBL" id="GQ150831">
    <property type="protein sequence ID" value="ACY56046.1"/>
    <property type="molecule type" value="Genomic_DNA"/>
</dbReference>
<dbReference type="EMBL" id="GQ150832">
    <property type="protein sequence ID" value="ACY56047.1"/>
    <property type="molecule type" value="Genomic_DNA"/>
</dbReference>
<dbReference type="EMBL" id="GQ150833">
    <property type="protein sequence ID" value="ACY56048.1"/>
    <property type="molecule type" value="Genomic_DNA"/>
</dbReference>
<dbReference type="EMBL" id="GQ150834">
    <property type="protein sequence ID" value="ACY56049.1"/>
    <property type="molecule type" value="Genomic_DNA"/>
</dbReference>
<dbReference type="EMBL" id="D50317">
    <property type="protein sequence ID" value="BAA23490.1"/>
    <property type="molecule type" value="mRNA"/>
</dbReference>
<dbReference type="EMBL" id="EU267957">
    <property type="protein sequence ID" value="ACA50479.1"/>
    <property type="molecule type" value="mRNA"/>
</dbReference>
<dbReference type="EMBL" id="AC007858">
    <property type="protein sequence ID" value="AAD39597.1"/>
    <property type="status" value="ALT_SEQ"/>
    <property type="molecule type" value="Genomic_DNA"/>
</dbReference>
<dbReference type="EMBL" id="AC120988">
    <property type="protein sequence ID" value="AAU10700.1"/>
    <property type="molecule type" value="Genomic_DNA"/>
</dbReference>
<dbReference type="EMBL" id="AP008211">
    <property type="protein sequence ID" value="BAF18338.2"/>
    <property type="molecule type" value="Genomic_DNA"/>
</dbReference>
<dbReference type="EMBL" id="AP014961">
    <property type="protein sequence ID" value="BAS95514.1"/>
    <property type="molecule type" value="Genomic_DNA"/>
</dbReference>
<dbReference type="EMBL" id="CM000142">
    <property type="protein sequence ID" value="EEE64817.1"/>
    <property type="molecule type" value="Genomic_DNA"/>
</dbReference>
<dbReference type="EMBL" id="AK100910">
    <property type="protein sequence ID" value="BAG94825.1"/>
    <property type="molecule type" value="mRNA"/>
</dbReference>
<dbReference type="PIR" id="T02965">
    <property type="entry name" value="T02965"/>
</dbReference>
<dbReference type="RefSeq" id="XP_015640473.1">
    <property type="nucleotide sequence ID" value="XM_015784987.1"/>
</dbReference>
<dbReference type="SMR" id="Q688T8"/>
<dbReference type="FunCoup" id="Q688T8">
    <property type="interactions" value="246"/>
</dbReference>
<dbReference type="STRING" id="39947.Q688T8"/>
<dbReference type="PaxDb" id="39947-Q688T8"/>
<dbReference type="EnsemblPlants" id="Os05t0580000-01">
    <property type="protein sequence ID" value="Os05t0580000-01"/>
    <property type="gene ID" value="Os05g0580000"/>
</dbReference>
<dbReference type="Gramene" id="Os05t0580000-01">
    <property type="protein sequence ID" value="Os05t0580000-01"/>
    <property type="gene ID" value="Os05g0580000"/>
</dbReference>
<dbReference type="KEGG" id="dosa:Os05g0580000"/>
<dbReference type="KEGG" id="osa:4339718"/>
<dbReference type="eggNOG" id="KOG1322">
    <property type="taxonomic scope" value="Eukaryota"/>
</dbReference>
<dbReference type="HOGENOM" id="CLU_029499_14_4_1"/>
<dbReference type="InParanoid" id="Q688T8"/>
<dbReference type="OMA" id="RKWPLHT"/>
<dbReference type="OrthoDB" id="1733332at2759"/>
<dbReference type="BRENDA" id="2.7.7.27">
    <property type="organism ID" value="4460"/>
</dbReference>
<dbReference type="PlantReactome" id="R-OSA-1119477">
    <property type="pathway name" value="Starch biosynthesis"/>
</dbReference>
<dbReference type="UniPathway" id="UPA00152"/>
<dbReference type="Proteomes" id="UP000000763">
    <property type="component" value="Chromosome 5"/>
</dbReference>
<dbReference type="Proteomes" id="UP000007752">
    <property type="component" value="Chromosome 5"/>
</dbReference>
<dbReference type="Proteomes" id="UP000059680">
    <property type="component" value="Chromosome 5"/>
</dbReference>
<dbReference type="GO" id="GO:0009507">
    <property type="term" value="C:chloroplast"/>
    <property type="evidence" value="ECO:0007669"/>
    <property type="project" value="UniProtKB-SubCell"/>
</dbReference>
<dbReference type="GO" id="GO:0005524">
    <property type="term" value="F:ATP binding"/>
    <property type="evidence" value="ECO:0007669"/>
    <property type="project" value="UniProtKB-KW"/>
</dbReference>
<dbReference type="GO" id="GO:0008878">
    <property type="term" value="F:glucose-1-phosphate adenylyltransferase activity"/>
    <property type="evidence" value="ECO:0007669"/>
    <property type="project" value="UniProtKB-EC"/>
</dbReference>
<dbReference type="GO" id="GO:0005978">
    <property type="term" value="P:glycogen biosynthetic process"/>
    <property type="evidence" value="ECO:0007669"/>
    <property type="project" value="InterPro"/>
</dbReference>
<dbReference type="GO" id="GO:0019252">
    <property type="term" value="P:starch biosynthetic process"/>
    <property type="evidence" value="ECO:0007669"/>
    <property type="project" value="UniProtKB-UniPathway"/>
</dbReference>
<dbReference type="CDD" id="cd02508">
    <property type="entry name" value="ADP_Glucose_PP"/>
    <property type="match status" value="1"/>
</dbReference>
<dbReference type="CDD" id="cd04651">
    <property type="entry name" value="LbH_G1P_AT_C"/>
    <property type="match status" value="1"/>
</dbReference>
<dbReference type="FunFam" id="2.160.10.10:FF:000010">
    <property type="entry name" value="Glucose-1-phosphate adenylyltransferase"/>
    <property type="match status" value="1"/>
</dbReference>
<dbReference type="FunFam" id="3.90.550.10:FF:000030">
    <property type="entry name" value="Glucose-1-phosphate adenylyltransferase"/>
    <property type="match status" value="1"/>
</dbReference>
<dbReference type="Gene3D" id="2.160.10.10">
    <property type="entry name" value="Hexapeptide repeat proteins"/>
    <property type="match status" value="1"/>
</dbReference>
<dbReference type="Gene3D" id="3.90.550.10">
    <property type="entry name" value="Spore Coat Polysaccharide Biosynthesis Protein SpsA, Chain A"/>
    <property type="match status" value="1"/>
</dbReference>
<dbReference type="InterPro" id="IPR011831">
    <property type="entry name" value="ADP-Glc_PPase"/>
</dbReference>
<dbReference type="InterPro" id="IPR005836">
    <property type="entry name" value="ADP_Glu_pyroP_CS"/>
</dbReference>
<dbReference type="InterPro" id="IPR005835">
    <property type="entry name" value="NTP_transferase_dom"/>
</dbReference>
<dbReference type="InterPro" id="IPR029044">
    <property type="entry name" value="Nucleotide-diphossugar_trans"/>
</dbReference>
<dbReference type="InterPro" id="IPR011004">
    <property type="entry name" value="Trimer_LpxA-like_sf"/>
</dbReference>
<dbReference type="NCBIfam" id="TIGR02091">
    <property type="entry name" value="glgC"/>
    <property type="match status" value="1"/>
</dbReference>
<dbReference type="NCBIfam" id="NF002772">
    <property type="entry name" value="PRK02862.1"/>
    <property type="match status" value="1"/>
</dbReference>
<dbReference type="PANTHER" id="PTHR43523:SF12">
    <property type="entry name" value="GLUCOSE-1-PHOSPHATE ADENYLYLTRANSFERASE LARGE SUBUNIT 1, CHLOROPLASTIC-RELATED"/>
    <property type="match status" value="1"/>
</dbReference>
<dbReference type="PANTHER" id="PTHR43523">
    <property type="entry name" value="GLUCOSE-1-PHOSPHATE ADENYLYLTRANSFERASE-RELATED"/>
    <property type="match status" value="1"/>
</dbReference>
<dbReference type="Pfam" id="PF25247">
    <property type="entry name" value="LbH_GLGC"/>
    <property type="match status" value="1"/>
</dbReference>
<dbReference type="Pfam" id="PF00483">
    <property type="entry name" value="NTP_transferase"/>
    <property type="match status" value="1"/>
</dbReference>
<dbReference type="SUPFAM" id="SSF53448">
    <property type="entry name" value="Nucleotide-diphospho-sugar transferases"/>
    <property type="match status" value="1"/>
</dbReference>
<dbReference type="SUPFAM" id="SSF51161">
    <property type="entry name" value="Trimeric LpxA-like enzymes"/>
    <property type="match status" value="1"/>
</dbReference>
<dbReference type="PROSITE" id="PS00808">
    <property type="entry name" value="ADP_GLC_PYROPHOSPH_1"/>
    <property type="match status" value="1"/>
</dbReference>
<dbReference type="PROSITE" id="PS00809">
    <property type="entry name" value="ADP_GLC_PYROPHOSPH_2"/>
    <property type="match status" value="1"/>
</dbReference>
<dbReference type="PROSITE" id="PS00810">
    <property type="entry name" value="ADP_GLC_PYROPHOSPH_3"/>
    <property type="match status" value="1"/>
</dbReference>
<proteinExistence type="evidence at protein level"/>
<comment type="function">
    <text evidence="7">Involved in synthesis of starch. Catalyzes the synthesis of ADP-glucose, a molecule that serves as an activated glycosyl donor for alpha-1,4-glucan synthesis. Essential for starch synthesis in leaf chloroplasts.</text>
</comment>
<comment type="catalytic activity">
    <reaction evidence="7">
        <text>alpha-D-glucose 1-phosphate + ATP + H(+) = ADP-alpha-D-glucose + diphosphate</text>
        <dbReference type="Rhea" id="RHEA:12120"/>
        <dbReference type="ChEBI" id="CHEBI:15378"/>
        <dbReference type="ChEBI" id="CHEBI:30616"/>
        <dbReference type="ChEBI" id="CHEBI:33019"/>
        <dbReference type="ChEBI" id="CHEBI:57498"/>
        <dbReference type="ChEBI" id="CHEBI:58601"/>
        <dbReference type="EC" id="2.7.7.27"/>
    </reaction>
</comment>
<comment type="activity regulation">
    <text evidence="7">Activated by 3'phosphoglycerate, inhibited by orthophosphate. Allosteric regulation.</text>
</comment>
<comment type="pathway">
    <text evidence="6">Glycan biosynthesis; starch biosynthesis.</text>
</comment>
<comment type="subunit">
    <text evidence="7">Heterotetramer composed of two small and two large subunits.</text>
</comment>
<comment type="subcellular location">
    <subcellularLocation>
        <location evidence="3">Plastid</location>
        <location evidence="3">Chloroplast</location>
    </subcellularLocation>
</comment>
<comment type="tissue specificity">
    <text evidence="2">Expressed in stems.</text>
</comment>
<comment type="developmental stage">
    <text evidence="2">Expressed in developing seeds from 4 to 12 days after flowering (DAF).</text>
</comment>
<comment type="induction">
    <text evidence="2">Induced by sucrose, glucose and abscisic acid (ABA).</text>
</comment>
<comment type="similarity">
    <text evidence="6">Belongs to the bacterial/plant glucose-1-phosphate adenylyltransferase family.</text>
</comment>
<comment type="sequence caution" evidence="6">
    <conflict type="erroneous gene model prediction">
        <sequence resource="EMBL-CDS" id="AAD39597"/>
    </conflict>
</comment>
<feature type="transit peptide" description="Chloroplast" evidence="1">
    <location>
        <begin position="1"/>
        <end position="74"/>
    </location>
</feature>
<feature type="chain" id="PRO_0000441126" description="Glucose-1-phosphate adenylyltransferase large subunit 3, chloroplastic/amyloplastic" evidence="1">
    <location>
        <begin position="75"/>
        <end position="519"/>
    </location>
</feature>
<feature type="sequence conflict" description="In Ref. 2; BAA23490." evidence="6" ref="2">
    <original>F</original>
    <variation>L</variation>
    <location>
        <position position="406"/>
    </location>
</feature>
<feature type="sequence conflict" description="In Ref. 2; BAA23490." evidence="6" ref="2">
    <original>E</original>
    <variation>G</variation>
    <location>
        <position position="413"/>
    </location>
</feature>
<reference key="1">
    <citation type="journal article" date="2009" name="Proc. Natl. Acad. Sci. U.S.A.">
        <title>Allelic diversities in rice starch biosynthesis lead to a diverse array of rice eating and cooking qualities.</title>
        <authorList>
            <person name="Tian Z."/>
            <person name="Qian Q."/>
            <person name="Liu Q."/>
            <person name="Yan M."/>
            <person name="Liu X."/>
            <person name="Yan C."/>
            <person name="Liu G."/>
            <person name="Gao Z."/>
            <person name="Tang S."/>
            <person name="Zeng D."/>
            <person name="Wang Y."/>
            <person name="Yu J."/>
            <person name="Gu M."/>
            <person name="Li J."/>
        </authorList>
    </citation>
    <scope>NUCLEOTIDE SEQUENCE [GENOMIC DNA]</scope>
</reference>
<reference key="2">
    <citation type="submission" date="1995-04" db="EMBL/GenBank/DDBJ databases">
        <title>A nucleotide sequence of a large subunit of ADP glucose pyrophosphorylase cDNA from developing seeds of rice.</title>
        <authorList>
            <person name="Satozawa T."/>
            <person name="Akagi H."/>
            <person name="Sakamoto M."/>
            <person name="Baba T."/>
            <person name="Shimada H."/>
            <person name="Fujimura T."/>
        </authorList>
    </citation>
    <scope>NUCLEOTIDE SEQUENCE [MRNA]</scope>
    <source>
        <tissue>Endosperm</tissue>
    </source>
</reference>
<reference key="3">
    <citation type="submission" date="2007-11" db="EMBL/GenBank/DDBJ databases">
        <title>Molecular cloning of the ADP-glucose pyrophosphorylase genes in rice.</title>
        <authorList>
            <person name="Yoon U.H."/>
            <person name="Kim Y.H."/>
        </authorList>
    </citation>
    <scope>NUCLEOTIDE SEQUENCE [MRNA]</scope>
    <source>
        <strain>cv. Ilpoombyeo</strain>
    </source>
</reference>
<reference key="4">
    <citation type="journal article" date="2005" name="Mol. Genet. Genomics">
        <title>A fine physical map of the rice chromosome 5.</title>
        <authorList>
            <person name="Cheng C.-H."/>
            <person name="Chung M.C."/>
            <person name="Liu S.-M."/>
            <person name="Chen S.-K."/>
            <person name="Kao F.Y."/>
            <person name="Lin S.-J."/>
            <person name="Hsiao S.-H."/>
            <person name="Tseng I.C."/>
            <person name="Hsing Y.-I.C."/>
            <person name="Wu H.-P."/>
            <person name="Chen C.-S."/>
            <person name="Shaw J.-F."/>
            <person name="Wu J."/>
            <person name="Matsumoto T."/>
            <person name="Sasaki T."/>
            <person name="Chen H.-C."/>
            <person name="Chow T.-Y."/>
        </authorList>
    </citation>
    <scope>NUCLEOTIDE SEQUENCE [LARGE SCALE GENOMIC DNA]</scope>
    <source>
        <strain>cv. Nipponbare</strain>
    </source>
</reference>
<reference key="5">
    <citation type="journal article" date="2005" name="Nature">
        <title>The map-based sequence of the rice genome.</title>
        <authorList>
            <consortium name="International rice genome sequencing project (IRGSP)"/>
        </authorList>
    </citation>
    <scope>NUCLEOTIDE SEQUENCE [LARGE SCALE GENOMIC DNA]</scope>
    <source>
        <strain>cv. Nipponbare</strain>
    </source>
</reference>
<reference key="6">
    <citation type="journal article" date="2008" name="Nucleic Acids Res.">
        <title>The rice annotation project database (RAP-DB): 2008 update.</title>
        <authorList>
            <consortium name="The rice annotation project (RAP)"/>
        </authorList>
    </citation>
    <scope>GENOME REANNOTATION</scope>
    <source>
        <strain>cv. Nipponbare</strain>
    </source>
</reference>
<reference key="7">
    <citation type="journal article" date="2013" name="Rice">
        <title>Improvement of the Oryza sativa Nipponbare reference genome using next generation sequence and optical map data.</title>
        <authorList>
            <person name="Kawahara Y."/>
            <person name="de la Bastide M."/>
            <person name="Hamilton J.P."/>
            <person name="Kanamori H."/>
            <person name="McCombie W.R."/>
            <person name="Ouyang S."/>
            <person name="Schwartz D.C."/>
            <person name="Tanaka T."/>
            <person name="Wu J."/>
            <person name="Zhou S."/>
            <person name="Childs K.L."/>
            <person name="Davidson R.M."/>
            <person name="Lin H."/>
            <person name="Quesada-Ocampo L."/>
            <person name="Vaillancourt B."/>
            <person name="Sakai H."/>
            <person name="Lee S.S."/>
            <person name="Kim J."/>
            <person name="Numa H."/>
            <person name="Itoh T."/>
            <person name="Buell C.R."/>
            <person name="Matsumoto T."/>
        </authorList>
    </citation>
    <scope>GENOME REANNOTATION</scope>
    <source>
        <strain>cv. Nipponbare</strain>
    </source>
</reference>
<reference key="8">
    <citation type="journal article" date="2005" name="PLoS Biol.">
        <title>The genomes of Oryza sativa: a history of duplications.</title>
        <authorList>
            <person name="Yu J."/>
            <person name="Wang J."/>
            <person name="Lin W."/>
            <person name="Li S."/>
            <person name="Li H."/>
            <person name="Zhou J."/>
            <person name="Ni P."/>
            <person name="Dong W."/>
            <person name="Hu S."/>
            <person name="Zeng C."/>
            <person name="Zhang J."/>
            <person name="Zhang Y."/>
            <person name="Li R."/>
            <person name="Xu Z."/>
            <person name="Li S."/>
            <person name="Li X."/>
            <person name="Zheng H."/>
            <person name="Cong L."/>
            <person name="Lin L."/>
            <person name="Yin J."/>
            <person name="Geng J."/>
            <person name="Li G."/>
            <person name="Shi J."/>
            <person name="Liu J."/>
            <person name="Lv H."/>
            <person name="Li J."/>
            <person name="Wang J."/>
            <person name="Deng Y."/>
            <person name="Ran L."/>
            <person name="Shi X."/>
            <person name="Wang X."/>
            <person name="Wu Q."/>
            <person name="Li C."/>
            <person name="Ren X."/>
            <person name="Wang J."/>
            <person name="Wang X."/>
            <person name="Li D."/>
            <person name="Liu D."/>
            <person name="Zhang X."/>
            <person name="Ji Z."/>
            <person name="Zhao W."/>
            <person name="Sun Y."/>
            <person name="Zhang Z."/>
            <person name="Bao J."/>
            <person name="Han Y."/>
            <person name="Dong L."/>
            <person name="Ji J."/>
            <person name="Chen P."/>
            <person name="Wu S."/>
            <person name="Liu J."/>
            <person name="Xiao Y."/>
            <person name="Bu D."/>
            <person name="Tan J."/>
            <person name="Yang L."/>
            <person name="Ye C."/>
            <person name="Zhang J."/>
            <person name="Xu J."/>
            <person name="Zhou Y."/>
            <person name="Yu Y."/>
            <person name="Zhang B."/>
            <person name="Zhuang S."/>
            <person name="Wei H."/>
            <person name="Liu B."/>
            <person name="Lei M."/>
            <person name="Yu H."/>
            <person name="Li Y."/>
            <person name="Xu H."/>
            <person name="Wei S."/>
            <person name="He X."/>
            <person name="Fang L."/>
            <person name="Zhang Z."/>
            <person name="Zhang Y."/>
            <person name="Huang X."/>
            <person name="Su Z."/>
            <person name="Tong W."/>
            <person name="Li J."/>
            <person name="Tong Z."/>
            <person name="Li S."/>
            <person name="Ye J."/>
            <person name="Wang L."/>
            <person name="Fang L."/>
            <person name="Lei T."/>
            <person name="Chen C.-S."/>
            <person name="Chen H.-C."/>
            <person name="Xu Z."/>
            <person name="Li H."/>
            <person name="Huang H."/>
            <person name="Zhang F."/>
            <person name="Xu H."/>
            <person name="Li N."/>
            <person name="Zhao C."/>
            <person name="Li S."/>
            <person name="Dong L."/>
            <person name="Huang Y."/>
            <person name="Li L."/>
            <person name="Xi Y."/>
            <person name="Qi Q."/>
            <person name="Li W."/>
            <person name="Zhang B."/>
            <person name="Hu W."/>
            <person name="Zhang Y."/>
            <person name="Tian X."/>
            <person name="Jiao Y."/>
            <person name="Liang X."/>
            <person name="Jin J."/>
            <person name="Gao L."/>
            <person name="Zheng W."/>
            <person name="Hao B."/>
            <person name="Liu S.-M."/>
            <person name="Wang W."/>
            <person name="Yuan L."/>
            <person name="Cao M."/>
            <person name="McDermott J."/>
            <person name="Samudrala R."/>
            <person name="Wang J."/>
            <person name="Wong G.K.-S."/>
            <person name="Yang H."/>
        </authorList>
    </citation>
    <scope>NUCLEOTIDE SEQUENCE [LARGE SCALE GENOMIC DNA]</scope>
    <source>
        <strain>cv. Nipponbare</strain>
    </source>
</reference>
<reference key="9">
    <citation type="journal article" date="2003" name="Science">
        <title>Collection, mapping, and annotation of over 28,000 cDNA clones from japonica rice.</title>
        <authorList>
            <consortium name="The rice full-length cDNA consortium"/>
        </authorList>
    </citation>
    <scope>NUCLEOTIDE SEQUENCE [LARGE SCALE MRNA]</scope>
    <source>
        <strain>cv. Nipponbare</strain>
    </source>
</reference>
<reference key="10">
    <citation type="journal article" date="2005" name="Plant Cell Physiol.">
        <title>Gene expression of ADP-glucose pyrophosphorylase and starch contents in rice cultured cells are cooperatively regulated by sucrose and ABA.</title>
        <authorList>
            <person name="Akihiro T."/>
            <person name="Mizuno K."/>
            <person name="Fujimura T."/>
        </authorList>
    </citation>
    <scope>TISSUE SPECIFICITY</scope>
    <scope>DEVELOPMENTAL STAGE</scope>
    <scope>INDUCTION</scope>
</reference>
<reference key="11">
    <citation type="journal article" date="2007" name="Plant Mol. Biol.">
        <title>Identification of the ADP-glucose pyrophosphorylase isoforms essential for starch synthesis in the leaf and seed endosperm of rice (Oryza sativa L.).</title>
        <authorList>
            <person name="Lee S.K."/>
            <person name="Hwang S.K."/>
            <person name="Han M."/>
            <person name="Eom J.S."/>
            <person name="Kang H.G."/>
            <person name="Han Y."/>
            <person name="Choi S.B."/>
            <person name="Cho M.H."/>
            <person name="Bhoo S.H."/>
            <person name="An G."/>
            <person name="Hahn T.R."/>
            <person name="Okita T.W."/>
            <person name="Jeon J.S."/>
        </authorList>
    </citation>
    <scope>FUNCTION</scope>
    <scope>CATALYTIC ACTIVITY</scope>
    <scope>ACTIVITY REGULATION</scope>
    <scope>SUBUNIT</scope>
    <scope>SUBCELLULAR LOCATION</scope>
</reference>
<gene>
    <name evidence="5" type="primary">AGPL3</name>
    <name evidence="4" type="synonym">APL3</name>
    <name evidence="10" type="ordered locus">Os05g0580000</name>
    <name evidence="6" type="ordered locus">LOC_Os05g50380</name>
    <name evidence="8" type="ORF">10A19I.12</name>
    <name evidence="11" type="ORF">OsJ_19673</name>
    <name evidence="9" type="ORF">OSJNBa0017N18.13</name>
</gene>
<keyword id="KW-0021">Allosteric enzyme</keyword>
<keyword id="KW-0067">ATP-binding</keyword>
<keyword id="KW-0150">Chloroplast</keyword>
<keyword id="KW-0547">Nucleotide-binding</keyword>
<keyword id="KW-0548">Nucleotidyltransferase</keyword>
<keyword id="KW-0934">Plastid</keyword>
<keyword id="KW-1185">Reference proteome</keyword>
<keyword id="KW-0750">Starch biosynthesis</keyword>
<keyword id="KW-0808">Transferase</keyword>
<keyword id="KW-0809">Transit peptide</keyword>
<sequence length="519" mass="57654">MQFSSVFPLEGKACVSPIRRGGEGSASDRLKIGDSSSIKHDRAVRRMCLGYRGTKNGAQCVLTSDAGPDTLHVRTSFRRNFADPNEVAAVILGGGTGTQLFPLTSTRATPAVPIGGCYRLIDIPMSNCFNSGINKIFIMTQFNSASLNRHIHRTYLGGGINFTDGSVEVLAATQMPGEAAGWFQGTADAVRKFIWVLEDYYKHKAIEHILILSGDQLYRMDYMELVQKHVDDNADITLSCAPVGESRASDYGLVKFDSSGRVIQFSEKPKGTDLEAMKVDTSFLNFAIDDPTKFPYIASMGVYVFKRDVLLNLLKSRYAELHDFGSEILPRALHEHNVQAYVFADYWEDIGTIRSFFDANMALCEQPPKFEFYDPKTPFFTSPRYLPPTKSDKCRIKDAIISHGCFLRECTIEHSIVGVRSRLNSACELKNTMMMGADLYETEDEISRLLSEGKVPIGVGENTKINNCIIDMNARVGRNVVITNSEGVQESDRPEEGYYIRSGIVVILKNATIKDGKVI</sequence>
<evidence type="ECO:0000255" key="1"/>
<evidence type="ECO:0000269" key="2">
    <source>
    </source>
</evidence>
<evidence type="ECO:0000269" key="3">
    <source>
    </source>
</evidence>
<evidence type="ECO:0000303" key="4">
    <source>
    </source>
</evidence>
<evidence type="ECO:0000303" key="5">
    <source>
    </source>
</evidence>
<evidence type="ECO:0000305" key="6"/>
<evidence type="ECO:0000305" key="7">
    <source>
    </source>
</evidence>
<evidence type="ECO:0000312" key="8">
    <source>
        <dbReference type="EMBL" id="AAD39597.1"/>
    </source>
</evidence>
<evidence type="ECO:0000312" key="9">
    <source>
        <dbReference type="EMBL" id="AAU10700.1"/>
    </source>
</evidence>
<evidence type="ECO:0000312" key="10">
    <source>
        <dbReference type="EMBL" id="BAF18338.2"/>
    </source>
</evidence>
<evidence type="ECO:0000312" key="11">
    <source>
        <dbReference type="EMBL" id="EEE64817.1"/>
    </source>
</evidence>
<organism>
    <name type="scientific">Oryza sativa subsp. japonica</name>
    <name type="common">Rice</name>
    <dbReference type="NCBI Taxonomy" id="39947"/>
    <lineage>
        <taxon>Eukaryota</taxon>
        <taxon>Viridiplantae</taxon>
        <taxon>Streptophyta</taxon>
        <taxon>Embryophyta</taxon>
        <taxon>Tracheophyta</taxon>
        <taxon>Spermatophyta</taxon>
        <taxon>Magnoliopsida</taxon>
        <taxon>Liliopsida</taxon>
        <taxon>Poales</taxon>
        <taxon>Poaceae</taxon>
        <taxon>BOP clade</taxon>
        <taxon>Oryzoideae</taxon>
        <taxon>Oryzeae</taxon>
        <taxon>Oryzinae</taxon>
        <taxon>Oryza</taxon>
        <taxon>Oryza sativa</taxon>
    </lineage>
</organism>